<feature type="chain" id="PRO_0000124863" description="Prefoldin subunit beta">
    <location>
        <begin position="1"/>
        <end position="121"/>
    </location>
</feature>
<feature type="helix" evidence="2">
    <location>
        <begin position="7"/>
        <end position="47"/>
    </location>
</feature>
<feature type="strand" evidence="2">
    <location>
        <begin position="54"/>
        <end position="58"/>
    </location>
</feature>
<feature type="strand" evidence="2">
    <location>
        <begin position="61"/>
        <end position="65"/>
    </location>
</feature>
<feature type="helix" evidence="2">
    <location>
        <begin position="67"/>
        <end position="107"/>
    </location>
</feature>
<sequence>MELPQNVQHQLAQFQQLQQQAQAISVQKQTVEMQINETQKALEELSRAADDAEVYKSSGNILIRVAKDELTEELQEKLETLQLREKTIERQEERVMKKLQEMQVNIQEAMKGAGINPGMGN</sequence>
<proteinExistence type="evidence at protein level"/>
<dbReference type="EMBL" id="AE000666">
    <property type="protein sequence ID" value="AAB85183.1"/>
    <property type="molecule type" value="Genomic_DNA"/>
</dbReference>
<dbReference type="PIR" id="C69190">
    <property type="entry name" value="C69190"/>
</dbReference>
<dbReference type="RefSeq" id="WP_010876316.1">
    <property type="nucleotide sequence ID" value="NC_000916.1"/>
</dbReference>
<dbReference type="PDB" id="1FXK">
    <property type="method" value="X-ray"/>
    <property type="resolution" value="2.30 A"/>
    <property type="chains" value="A=5-111, B=6-114"/>
</dbReference>
<dbReference type="PDBsum" id="1FXK"/>
<dbReference type="SMR" id="O26774"/>
<dbReference type="STRING" id="187420.MTH_678"/>
<dbReference type="PaxDb" id="187420-MTH_678"/>
<dbReference type="EnsemblBacteria" id="AAB85183">
    <property type="protein sequence ID" value="AAB85183"/>
    <property type="gene ID" value="MTH_678"/>
</dbReference>
<dbReference type="KEGG" id="mth:MTH_678"/>
<dbReference type="PATRIC" id="fig|187420.15.peg.659"/>
<dbReference type="HOGENOM" id="CLU_131909_0_1_2"/>
<dbReference type="InParanoid" id="O26774"/>
<dbReference type="EvolutionaryTrace" id="O26774"/>
<dbReference type="Proteomes" id="UP000005223">
    <property type="component" value="Chromosome"/>
</dbReference>
<dbReference type="GO" id="GO:0005737">
    <property type="term" value="C:cytoplasm"/>
    <property type="evidence" value="ECO:0007669"/>
    <property type="project" value="UniProtKB-SubCell"/>
</dbReference>
<dbReference type="GO" id="GO:0016272">
    <property type="term" value="C:prefoldin complex"/>
    <property type="evidence" value="ECO:0007669"/>
    <property type="project" value="UniProtKB-UniRule"/>
</dbReference>
<dbReference type="GO" id="GO:0051082">
    <property type="term" value="F:unfolded protein binding"/>
    <property type="evidence" value="ECO:0007669"/>
    <property type="project" value="UniProtKB-UniRule"/>
</dbReference>
<dbReference type="GO" id="GO:0006457">
    <property type="term" value="P:protein folding"/>
    <property type="evidence" value="ECO:0007669"/>
    <property type="project" value="UniProtKB-UniRule"/>
</dbReference>
<dbReference type="CDD" id="cd23162">
    <property type="entry name" value="Prefoldin_beta_GimC"/>
    <property type="match status" value="1"/>
</dbReference>
<dbReference type="Gene3D" id="1.10.287.370">
    <property type="match status" value="1"/>
</dbReference>
<dbReference type="HAMAP" id="MF_00307">
    <property type="entry name" value="PfdB"/>
    <property type="match status" value="1"/>
</dbReference>
<dbReference type="InterPro" id="IPR002777">
    <property type="entry name" value="PFD_beta-like"/>
</dbReference>
<dbReference type="InterPro" id="IPR012713">
    <property type="entry name" value="PfdB"/>
</dbReference>
<dbReference type="InterPro" id="IPR009053">
    <property type="entry name" value="Prefoldin"/>
</dbReference>
<dbReference type="NCBIfam" id="TIGR02338">
    <property type="entry name" value="gimC_beta"/>
    <property type="match status" value="1"/>
</dbReference>
<dbReference type="Pfam" id="PF01920">
    <property type="entry name" value="Prefoldin_2"/>
    <property type="match status" value="1"/>
</dbReference>
<dbReference type="SUPFAM" id="SSF46579">
    <property type="entry name" value="Prefoldin"/>
    <property type="match status" value="1"/>
</dbReference>
<accession>O26774</accession>
<organism>
    <name type="scientific">Methanothermobacter thermautotrophicus (strain ATCC 29096 / DSM 1053 / JCM 10044 / NBRC 100330 / Delta H)</name>
    <name type="common">Methanobacterium thermoautotrophicum</name>
    <dbReference type="NCBI Taxonomy" id="187420"/>
    <lineage>
        <taxon>Archaea</taxon>
        <taxon>Methanobacteriati</taxon>
        <taxon>Methanobacteriota</taxon>
        <taxon>Methanomada group</taxon>
        <taxon>Methanobacteria</taxon>
        <taxon>Methanobacteriales</taxon>
        <taxon>Methanobacteriaceae</taxon>
        <taxon>Methanothermobacter</taxon>
    </lineage>
</organism>
<keyword id="KW-0002">3D-structure</keyword>
<keyword id="KW-0143">Chaperone</keyword>
<keyword id="KW-0963">Cytoplasm</keyword>
<keyword id="KW-1185">Reference proteome</keyword>
<gene>
    <name type="primary">pfdB</name>
    <name type="ordered locus">MTH_678</name>
</gene>
<protein>
    <recommendedName>
        <fullName>Prefoldin subunit beta</fullName>
    </recommendedName>
    <alternativeName>
        <fullName>GimC subunit beta</fullName>
    </alternativeName>
</protein>
<evidence type="ECO:0000305" key="1"/>
<evidence type="ECO:0007829" key="2">
    <source>
        <dbReference type="PDB" id="1FXK"/>
    </source>
</evidence>
<comment type="function">
    <text>Molecular chaperone capable of stabilizing a range of proteins. Seems to fulfill an ATP-independent, HSP70-like function in archaeal de novo protein folding.</text>
</comment>
<comment type="subunit">
    <text>Heterohexamer of two alpha and four beta subunits.</text>
</comment>
<comment type="subcellular location">
    <subcellularLocation>
        <location>Cytoplasm</location>
    </subcellularLocation>
</comment>
<comment type="similarity">
    <text evidence="1">Belongs to the prefoldin subunit beta family.</text>
</comment>
<reference key="1">
    <citation type="journal article" date="1997" name="J. Bacteriol.">
        <title>Complete genome sequence of Methanobacterium thermoautotrophicum deltaH: functional analysis and comparative genomics.</title>
        <authorList>
            <person name="Smith D.R."/>
            <person name="Doucette-Stamm L.A."/>
            <person name="Deloughery C."/>
            <person name="Lee H.-M."/>
            <person name="Dubois J."/>
            <person name="Aldredge T."/>
            <person name="Bashirzadeh R."/>
            <person name="Blakely D."/>
            <person name="Cook R."/>
            <person name="Gilbert K."/>
            <person name="Harrison D."/>
            <person name="Hoang L."/>
            <person name="Keagle P."/>
            <person name="Lumm W."/>
            <person name="Pothier B."/>
            <person name="Qiu D."/>
            <person name="Spadafora R."/>
            <person name="Vicare R."/>
            <person name="Wang Y."/>
            <person name="Wierzbowski J."/>
            <person name="Gibson R."/>
            <person name="Jiwani N."/>
            <person name="Caruso A."/>
            <person name="Bush D."/>
            <person name="Safer H."/>
            <person name="Patwell D."/>
            <person name="Prabhakar S."/>
            <person name="McDougall S."/>
            <person name="Shimer G."/>
            <person name="Goyal A."/>
            <person name="Pietrovski S."/>
            <person name="Church G.M."/>
            <person name="Daniels C.J."/>
            <person name="Mao J.-I."/>
            <person name="Rice P."/>
            <person name="Noelling J."/>
            <person name="Reeve J.N."/>
        </authorList>
    </citation>
    <scope>NUCLEOTIDE SEQUENCE [LARGE SCALE GENOMIC DNA]</scope>
    <source>
        <strain>ATCC 29096 / DSM 1053 / JCM 10044 / NBRC 100330 / Delta H</strain>
    </source>
</reference>
<reference key="2">
    <citation type="journal article" date="1999" name="EMBO J.">
        <title>MtGimC, a novel archaeal chaperone related to the eukaryotic chaperonin cofactor GimC/prefoldin.</title>
        <authorList>
            <person name="Leroux M.R."/>
            <person name="Fandrich M."/>
            <person name="Klunker D."/>
            <person name="Siegers K."/>
            <person name="Lupas A.N."/>
            <person name="Brown J.R."/>
            <person name="Schiebel E."/>
            <person name="Dobson C.M."/>
            <person name="Hartl F.U."/>
        </authorList>
    </citation>
    <scope>CHARACTERIZATION</scope>
    <source>
        <strain>ATCC 29096 / DSM 1053 / JCM 10044 / NBRC 100330 / Delta H</strain>
    </source>
</reference>
<reference key="3">
    <citation type="journal article" date="2000" name="Cell">
        <title>Structure of the molecular chaperone prefoldin. Unique interaction of multiple coiled coil tentacles with unfolded proteins.</title>
        <authorList>
            <person name="Siegert R."/>
            <person name="Leroux M.R."/>
            <person name="Scheufler C."/>
            <person name="Hartl F.U."/>
            <person name="Moarefi I."/>
        </authorList>
    </citation>
    <scope>X-RAY CRYSTALLOGRAPHY (2.3 ANGSTROMS)</scope>
</reference>
<name>PFDB_METTH</name>